<feature type="peptide" id="PRO_0000400720" description="U3-theraphotoxin-Hhn1r">
    <location>
        <begin position="1"/>
        <end position="32"/>
    </location>
</feature>
<feature type="disulfide bond" evidence="1">
    <location>
        <begin position="2"/>
        <end position="15"/>
    </location>
</feature>
<feature type="disulfide bond" evidence="1">
    <location>
        <begin position="9"/>
        <end position="20"/>
    </location>
</feature>
<feature type="disulfide bond" evidence="1">
    <location>
        <begin position="14"/>
        <end position="27"/>
    </location>
</feature>
<protein>
    <recommendedName>
        <fullName>U3-theraphotoxin-Hhn1r</fullName>
        <shortName>U3-TRTX-Hhn1r</shortName>
    </recommendedName>
    <alternativeName>
        <fullName>Hainantoxin F4-23.43</fullName>
    </alternativeName>
    <alternativeName>
        <fullName>Peptide F4-23.43</fullName>
    </alternativeName>
</protein>
<dbReference type="SMR" id="P0CH72"/>
<dbReference type="ArachnoServer" id="AS001810">
    <property type="toxin name" value="U3-theraphotoxin-Hhn1r"/>
</dbReference>
<dbReference type="GO" id="GO:0005576">
    <property type="term" value="C:extracellular region"/>
    <property type="evidence" value="ECO:0007669"/>
    <property type="project" value="UniProtKB-SubCell"/>
</dbReference>
<dbReference type="GO" id="GO:0008200">
    <property type="term" value="F:ion channel inhibitor activity"/>
    <property type="evidence" value="ECO:0007669"/>
    <property type="project" value="InterPro"/>
</dbReference>
<dbReference type="GO" id="GO:0090729">
    <property type="term" value="F:toxin activity"/>
    <property type="evidence" value="ECO:0007669"/>
    <property type="project" value="UniProtKB-KW"/>
</dbReference>
<dbReference type="InterPro" id="IPR011696">
    <property type="entry name" value="Huwentoxin-1"/>
</dbReference>
<dbReference type="InterPro" id="IPR013140">
    <property type="entry name" value="Huwentoxin_CS1"/>
</dbReference>
<dbReference type="Pfam" id="PF07740">
    <property type="entry name" value="Toxin_12"/>
    <property type="match status" value="1"/>
</dbReference>
<dbReference type="SUPFAM" id="SSF57059">
    <property type="entry name" value="omega toxin-like"/>
    <property type="match status" value="1"/>
</dbReference>
<dbReference type="PROSITE" id="PS60021">
    <property type="entry name" value="HWTX_1"/>
    <property type="match status" value="1"/>
</dbReference>
<name>HN423_CYRHA</name>
<reference key="1">
    <citation type="journal article" date="2010" name="J. Proteome Res.">
        <title>Molecular diversification of peptide toxins from the tarantula Haplopelma hainanum (Ornithoctonus hainana) venom based on transcriptomic, peptidomic, and genomic analyses.</title>
        <authorList>
            <person name="Tang X."/>
            <person name="Zhang Y."/>
            <person name="Hu W."/>
            <person name="Xu D."/>
            <person name="Tao H."/>
            <person name="Yang X."/>
            <person name="Li Y."/>
            <person name="Jiang L."/>
            <person name="Liang S."/>
        </authorList>
    </citation>
    <scope>PROTEIN SEQUENCE</scope>
    <scope>IDENTIFICATION BY MASS SPECTROMETRY</scope>
    <source>
        <tissue>Venom</tissue>
    </source>
</reference>
<sequence>DCAGYMRECKEKLCCSGYVCSSRWKWCVLPAP</sequence>
<keyword id="KW-0903">Direct protein sequencing</keyword>
<keyword id="KW-1015">Disulfide bond</keyword>
<keyword id="KW-0872">Ion channel impairing toxin</keyword>
<keyword id="KW-0960">Knottin</keyword>
<keyword id="KW-0964">Secreted</keyword>
<keyword id="KW-0800">Toxin</keyword>
<proteinExistence type="evidence at protein level"/>
<organism>
    <name type="scientific">Cyriopagopus hainanus</name>
    <name type="common">Chinese bird spider</name>
    <name type="synonym">Haplopelma hainanum</name>
    <dbReference type="NCBI Taxonomy" id="209901"/>
    <lineage>
        <taxon>Eukaryota</taxon>
        <taxon>Metazoa</taxon>
        <taxon>Ecdysozoa</taxon>
        <taxon>Arthropoda</taxon>
        <taxon>Chelicerata</taxon>
        <taxon>Arachnida</taxon>
        <taxon>Araneae</taxon>
        <taxon>Mygalomorphae</taxon>
        <taxon>Theraphosidae</taxon>
        <taxon>Haplopelma</taxon>
    </lineage>
</organism>
<evidence type="ECO:0000250" key="1"/>
<evidence type="ECO:0000305" key="2"/>
<comment type="function">
    <text evidence="1">Ion channel inhibitor.</text>
</comment>
<comment type="subcellular location">
    <subcellularLocation>
        <location>Secreted</location>
    </subcellularLocation>
</comment>
<comment type="tissue specificity">
    <text>Expressed by the venom gland.</text>
</comment>
<comment type="domain">
    <text evidence="1">The presence of a 'disulfide through disulfide knot' structurally defines this protein as a knottin.</text>
</comment>
<comment type="similarity">
    <text evidence="2">Belongs to the neurotoxin 10 (Hwtx-1) family. 16 (Hntx-8) subfamily.</text>
</comment>
<accession>P0CH72</accession>